<accession>Q6IN02</accession>
<accession>O88344</accession>
<accession>Q7TQC2</accession>
<reference key="1">
    <citation type="journal article" date="1997" name="Proc. Natl. Acad. Sci. U.S.A.">
        <title>Subtraction hybridization identifies a transformation progression-associated gene PEG-3 with sequence homology to a growth arrest and DNA damage-inducible gene.</title>
        <authorList>
            <person name="Su Z.-Z."/>
            <person name="Shi Y."/>
            <person name="Fisher P.B."/>
        </authorList>
    </citation>
    <scope>NUCLEOTIDE SEQUENCE [MRNA]</scope>
    <source>
        <strain>Sprague-Dawley</strain>
    </source>
</reference>
<reference key="2">
    <citation type="journal article" date="2003" name="Oncogene">
        <title>Gadd34 functional domains involved in growth suppression and apoptosis.</title>
        <authorList>
            <person name="Hollander M.C."/>
            <person name="Poola-Kella S."/>
            <person name="Fornace A.J. Jr."/>
        </authorList>
    </citation>
    <scope>NUCLEOTIDE SEQUENCE [GENOMIC DNA]</scope>
    <scope>MUTANT PEG-3</scope>
    <source>
        <strain>Sprague-Dawley</strain>
    </source>
</reference>
<reference key="3">
    <citation type="journal article" date="2004" name="Genome Res.">
        <title>The status, quality, and expansion of the NIH full-length cDNA project: the Mammalian Gene Collection (MGC).</title>
        <authorList>
            <consortium name="The MGC Project Team"/>
        </authorList>
    </citation>
    <scope>NUCLEOTIDE SEQUENCE [LARGE SCALE MRNA]</scope>
    <source>
        <tissue>Heart</tissue>
    </source>
</reference>
<reference key="4">
    <citation type="journal article" date="1994" name="Mol. Cell. Biol.">
        <title>The gadd and MyD genes define a novel set of mammalian genes encoding acidic proteins that synergistically suppress cell growth.</title>
        <authorList>
            <person name="Zhan Q."/>
            <person name="Lord K.A."/>
            <person name="Alamo I. Jr."/>
            <person name="Hollander M.C."/>
            <person name="Carrier F."/>
            <person name="Ron D."/>
            <person name="Kohn K.W."/>
            <person name="Hoffman B."/>
            <person name="Liebermann D.A."/>
            <person name="Fornace A.J. Jr."/>
        </authorList>
    </citation>
    <scope>INDUCTION</scope>
</reference>
<reference key="5">
    <citation type="journal article" date="1999" name="Proc. Natl. Acad. Sci. U.S.A.">
        <title>PEG-3, a nontransforming cancer progression gene, is a positive regulator of cancer aggressiveness and angiogenesis.</title>
        <authorList>
            <person name="Su Z.-Z."/>
            <person name="Goldstein N.I."/>
            <person name="Jiang H."/>
            <person name="Wang M.-N."/>
            <person name="Duigou G.J."/>
            <person name="Young C.S.H."/>
            <person name="Fisher P.B."/>
        </authorList>
    </citation>
    <scope>MUTANT PEG-3</scope>
</reference>
<reference key="6">
    <citation type="journal article" date="2005" name="Oncogene">
        <title>Potential molecular mechanism for rodent tumorigenesis: mutational generation of Progression Elevated Gene-3 (PEG-3).</title>
        <authorList>
            <person name="Su Z.-Z."/>
            <person name="Emdad L."/>
            <person name="Sarkar D."/>
            <person name="Randolph A."/>
            <person name="Valerie K."/>
            <person name="Yacoub A."/>
            <person name="Dent P."/>
            <person name="Fisher P.B."/>
        </authorList>
    </citation>
    <scope>FUNCTION</scope>
    <scope>MUTANT PEG-3</scope>
</reference>
<gene>
    <name type="primary">Ppp1r15a</name>
    <name type="synonym">Gadd34</name>
    <name type="synonym">Myd116</name>
    <name type="synonym">Peg3</name>
</gene>
<name>PR15A_RAT</name>
<feature type="chain" id="PRO_0000320519" description="Protein phosphatase 1 regulatory subunit 15A">
    <location>
        <begin position="1"/>
        <end position="578"/>
    </location>
</feature>
<feature type="topological domain" description="Cytoplasmic" evidence="2">
    <location>
        <begin position="1"/>
        <end position="21"/>
    </location>
</feature>
<feature type="intramembrane region" description="Helical" evidence="2">
    <location>
        <begin position="22"/>
        <end position="39"/>
    </location>
</feature>
<feature type="topological domain" description="Cytoplasmic" evidence="2">
    <location>
        <begin position="40"/>
        <end position="578"/>
    </location>
</feature>
<feature type="repeat" description="1">
    <location>
        <begin position="279"/>
        <end position="318"/>
    </location>
</feature>
<feature type="repeat" description="2">
    <location>
        <begin position="319"/>
        <end position="357"/>
    </location>
</feature>
<feature type="repeat" description="3">
    <location>
        <begin position="358"/>
        <end position="375"/>
    </location>
</feature>
<feature type="region of interest" description="Required for localization in the endoplasmic reticulum" evidence="1">
    <location>
        <begin position="1"/>
        <end position="165"/>
    </location>
</feature>
<feature type="region of interest" description="Disordered" evidence="3">
    <location>
        <begin position="101"/>
        <end position="122"/>
    </location>
</feature>
<feature type="region of interest" description="Disordered" evidence="3">
    <location>
        <begin position="158"/>
        <end position="314"/>
    </location>
</feature>
<feature type="region of interest" description="3 X approximate repeats">
    <location>
        <begin position="279"/>
        <end position="375"/>
    </location>
</feature>
<feature type="region of interest" description="Interaction with SMAD7" evidence="1">
    <location>
        <begin position="319"/>
        <end position="417"/>
    </location>
</feature>
<feature type="region of interest" description="Disordered" evidence="3">
    <location>
        <begin position="330"/>
        <end position="353"/>
    </location>
</feature>
<feature type="region of interest" description="Interaction with KMT2A/MLL1" evidence="1">
    <location>
        <begin position="363"/>
        <end position="462"/>
    </location>
</feature>
<feature type="region of interest" description="Disordered" evidence="3">
    <location>
        <begin position="368"/>
        <end position="393"/>
    </location>
</feature>
<feature type="region of interest" description="Interaction with SMARCB1" evidence="1">
    <location>
        <begin position="443"/>
        <end position="490"/>
    </location>
</feature>
<feature type="region of interest" description="Disordered" evidence="3">
    <location>
        <begin position="532"/>
        <end position="578"/>
    </location>
</feature>
<feature type="compositionally biased region" description="Basic and acidic residues" evidence="3">
    <location>
        <begin position="111"/>
        <end position="122"/>
    </location>
</feature>
<feature type="compositionally biased region" description="Basic and acidic residues" evidence="3">
    <location>
        <begin position="209"/>
        <end position="224"/>
    </location>
</feature>
<feature type="compositionally biased region" description="Basic and acidic residues" evidence="3">
    <location>
        <begin position="232"/>
        <end position="254"/>
    </location>
</feature>
<feature type="compositionally biased region" description="Acidic residues" evidence="3">
    <location>
        <begin position="292"/>
        <end position="306"/>
    </location>
</feature>
<feature type="compositionally biased region" description="Acidic residues" evidence="3">
    <location>
        <begin position="331"/>
        <end position="347"/>
    </location>
</feature>
<feature type="compositionally biased region" description="Low complexity" evidence="3">
    <location>
        <begin position="532"/>
        <end position="546"/>
    </location>
</feature>
<feature type="compositionally biased region" description="Polar residues" evidence="3">
    <location>
        <begin position="547"/>
        <end position="558"/>
    </location>
</feature>
<feature type="compositionally biased region" description="Pro residues" evidence="3">
    <location>
        <begin position="560"/>
        <end position="570"/>
    </location>
</feature>
<feature type="modified residue" description="Phosphotyrosine" evidence="2">
    <location>
        <position position="236"/>
    </location>
</feature>
<feature type="modified residue" description="Phosphotyrosine" evidence="2">
    <location>
        <position position="365"/>
    </location>
</feature>
<feature type="modified residue" description="Phosphotyrosine" evidence="2">
    <location>
        <position position="419"/>
    </location>
</feature>
<feature type="sequence conflict" description="In Ref. 3; AAH72513." evidence="6" ref="3">
    <original>AS</original>
    <variation>TA</variation>
    <location>
        <begin position="347"/>
        <end position="348"/>
    </location>
</feature>
<feature type="sequence conflict" description="In Ref. 1; AAC24980." evidence="6" ref="1">
    <original>D</original>
    <variation>G</variation>
    <location>
        <position position="453"/>
    </location>
</feature>
<sequence length="578" mass="63570">MAPSPRPQHVLHWKEAHSFYLLSPLMGFLSRAWSRLRGPEVSEAWLAETVAGANQIEADALLTPPPVSENHLPLRETEGNGTPEWSKAAQRLCLDVEAQSSPPKTWGLSDIDEHNGKPGQDGLREQEVEHTAGLPTLQPLHLQGADKKVGEVVAREEGVSELAYPTSHWEGGPAEDEEDTETVKKAHQASAASIAPGYKPSTSVYCPGEAEHRATEEKGTDNKAEPSGSHSRVWEYHTRERPKQEGETKPEQHRAGQSHPCQNAEAEEGGPETSVCSGSAFLKAWVYRPGEDTEEEEDSDLDSAEEDTAHTCTTPHTSAFLKAWVYRPGEDTEEEDDGDWDSAEEDASQSCTTPHTSAFLKAWVYRPGEDTEEEDDSENVAPVDSETVDSCQSTQHCLPVEKTKGCGEAEPPPFQVAFYLPGQKPAPPWAAPKLPLRLQKRLRSFKAPARNQDPEIPLKGRKVHFSEKVTVHFLAVWAGPAQAARRGPWEQFARDRSRFARRIAQAEEQLGPYLTPAFRARAWTRLRNLPLPLSSSSLPLPEPCSSTEATPLSQDVTTPSPLPSEIPPPSLDLGGRRG</sequence>
<proteinExistence type="evidence at transcript level"/>
<evidence type="ECO:0000250" key="1"/>
<evidence type="ECO:0000250" key="2">
    <source>
        <dbReference type="UniProtKB" id="O75807"/>
    </source>
</evidence>
<evidence type="ECO:0000256" key="3">
    <source>
        <dbReference type="SAM" id="MobiDB-lite"/>
    </source>
</evidence>
<evidence type="ECO:0000269" key="4">
    <source>
    </source>
</evidence>
<evidence type="ECO:0000269" key="5">
    <source>
    </source>
</evidence>
<evidence type="ECO:0000305" key="6"/>
<evidence type="ECO:0000305" key="7">
    <source>
    </source>
</evidence>
<organism>
    <name type="scientific">Rattus norvegicus</name>
    <name type="common">Rat</name>
    <dbReference type="NCBI Taxonomy" id="10116"/>
    <lineage>
        <taxon>Eukaryota</taxon>
        <taxon>Metazoa</taxon>
        <taxon>Chordata</taxon>
        <taxon>Craniata</taxon>
        <taxon>Vertebrata</taxon>
        <taxon>Euteleostomi</taxon>
        <taxon>Mammalia</taxon>
        <taxon>Eutheria</taxon>
        <taxon>Euarchontoglires</taxon>
        <taxon>Glires</taxon>
        <taxon>Rodentia</taxon>
        <taxon>Myomorpha</taxon>
        <taxon>Muroidea</taxon>
        <taxon>Muridae</taxon>
        <taxon>Murinae</taxon>
        <taxon>Rattus</taxon>
    </lineage>
</organism>
<protein>
    <recommendedName>
        <fullName>Protein phosphatase 1 regulatory subunit 15A</fullName>
    </recommendedName>
    <alternativeName>
        <fullName>Growth arrest and DNA damage-inducible protein GADD34</fullName>
    </alternativeName>
    <alternativeName>
        <fullName>Myeloid differentiation primary response protein MyD116 homolog</fullName>
    </alternativeName>
    <alternativeName>
        <fullName>Progression elevated gene 3 protein</fullName>
        <shortName>PEG-3</shortName>
    </alternativeName>
</protein>
<comment type="function">
    <text evidence="2 4">Recruits the serine/threonine-protein phosphatase PPP1CA to prevents excessive phosphorylation of the translation initiation factor eIF-2A/EIF2S1, thereby reversing the shut-off of protein synthesis initiated by stress-inducible kinases and facilitating recovery of cells from stress. Down-regulates the TGF-beta signaling pathway by promoting dephosphorylation of TGFB1 by PP1. May promote apoptosis by inducing TP53 phosphorylation on 'Ser-15'. Plays an essential role in autophagy by tuning translation during starvation, thus enabling lysosomal biogenesis and a sustained autophagic flux.</text>
</comment>
<comment type="subunit">
    <text evidence="1 2">Interacts with PPP1CA. Interacts with EIF2S1 (By similarity). Interacts with PCNA (By similarity). Interacts with LYN and KMT2A/MLL1. Interacts with PPP1R1A and SMARCB1. Interacts with SMAD7. Interacts with BAG1. Interacts with NOX4 (By similarity).</text>
</comment>
<comment type="subcellular location">
    <subcellularLocation>
        <location>Endoplasmic reticulum membrane</location>
        <topology>Peripheral membrane protein</topology>
        <orientation evidence="2">Cytoplasmic side</orientation>
    </subcellularLocation>
    <subcellularLocation>
        <location>Mitochondrion outer membrane</location>
        <topology>Peripheral membrane protein</topology>
        <orientation evidence="2">Cytoplasmic side</orientation>
    </subcellularLocation>
    <text evidence="2">Associates with membranes via an N-terminal amphipathic intramembrane region.</text>
</comment>
<comment type="induction">
    <text evidence="5">By lipopolysaccharide.</text>
</comment>
<comment type="PTM">
    <text evidence="2">Phosphorylated at multiple Ser/Thr residues. Phosphorylated on tyrosine by LYN; which impairs its antiproliferative activity. Phosphorylation at Tyr-236 enhances proteasomal degradation, this position is dephosphorylated by PTPN2.</text>
</comment>
<comment type="PTM">
    <text evidence="2">Polyubiquitinated. Exhibits a rapid proteasomal degradation with a half-life under 1 hour, ubiquitination depends on endoplasmic reticulum association.</text>
</comment>
<comment type="similarity">
    <text evidence="6">Belongs to the PPP1R15 family.</text>
</comment>
<comment type="caution">
    <text evidence="7">The sequence described initially (PubMed:9256446) corresponds to a mutant, frameshifted form named PEG-3 that frequently arises during cell transformation and does not seem to exist in normal cells. PEG-3 functions as a dominant negative of GADD34-mediated pro-apoptotic pathway and promotes cancer aggressiveness.</text>
</comment>
<comment type="sequence caution" evidence="6">
    <conflict type="frameshift">
        <sequence resource="EMBL-CDS" id="AAC24980"/>
    </conflict>
</comment>
<dbReference type="EMBL" id="AF020618">
    <property type="protein sequence ID" value="AAC24980.1"/>
    <property type="status" value="ALT_FRAME"/>
    <property type="molecule type" value="mRNA"/>
</dbReference>
<dbReference type="EMBL" id="AY128642">
    <property type="protein sequence ID" value="AAM77795.1"/>
    <property type="molecule type" value="Genomic_DNA"/>
</dbReference>
<dbReference type="EMBL" id="BC072513">
    <property type="protein sequence ID" value="AAH72513.1"/>
    <property type="molecule type" value="mRNA"/>
</dbReference>
<dbReference type="RefSeq" id="NP_598230.2">
    <property type="nucleotide sequence ID" value="NM_133546.3"/>
</dbReference>
<dbReference type="SMR" id="Q6IN02"/>
<dbReference type="FunCoup" id="Q6IN02">
    <property type="interactions" value="178"/>
</dbReference>
<dbReference type="STRING" id="10116.ENSRNOP00000048451"/>
<dbReference type="PhosphoSitePlus" id="Q6IN02"/>
<dbReference type="PaxDb" id="10116-ENSRNOP00000048451"/>
<dbReference type="GeneID" id="171071"/>
<dbReference type="KEGG" id="rno:171071"/>
<dbReference type="AGR" id="RGD:621526"/>
<dbReference type="CTD" id="23645"/>
<dbReference type="RGD" id="621526">
    <property type="gene designation" value="Ppp1r15a"/>
</dbReference>
<dbReference type="eggNOG" id="ENOG502S745">
    <property type="taxonomic scope" value="Eukaryota"/>
</dbReference>
<dbReference type="InParanoid" id="Q6IN02"/>
<dbReference type="OrthoDB" id="5976067at2759"/>
<dbReference type="PhylomeDB" id="Q6IN02"/>
<dbReference type="TreeFam" id="TF105547"/>
<dbReference type="PRO" id="PR:Q6IN02"/>
<dbReference type="Proteomes" id="UP000002494">
    <property type="component" value="Unplaced"/>
</dbReference>
<dbReference type="GO" id="GO:0005737">
    <property type="term" value="C:cytoplasm"/>
    <property type="evidence" value="ECO:0000266"/>
    <property type="project" value="RGD"/>
</dbReference>
<dbReference type="GO" id="GO:0005783">
    <property type="term" value="C:endoplasmic reticulum"/>
    <property type="evidence" value="ECO:0000266"/>
    <property type="project" value="RGD"/>
</dbReference>
<dbReference type="GO" id="GO:0005789">
    <property type="term" value="C:endoplasmic reticulum membrane"/>
    <property type="evidence" value="ECO:0007669"/>
    <property type="project" value="UniProtKB-SubCell"/>
</dbReference>
<dbReference type="GO" id="GO:0005794">
    <property type="term" value="C:Golgi apparatus"/>
    <property type="evidence" value="ECO:0000266"/>
    <property type="project" value="RGD"/>
</dbReference>
<dbReference type="GO" id="GO:0016020">
    <property type="term" value="C:membrane"/>
    <property type="evidence" value="ECO:0000266"/>
    <property type="project" value="RGD"/>
</dbReference>
<dbReference type="GO" id="GO:0005741">
    <property type="term" value="C:mitochondrial outer membrane"/>
    <property type="evidence" value="ECO:0007669"/>
    <property type="project" value="UniProtKB-SubCell"/>
</dbReference>
<dbReference type="GO" id="GO:0005739">
    <property type="term" value="C:mitochondrion"/>
    <property type="evidence" value="ECO:0000266"/>
    <property type="project" value="RGD"/>
</dbReference>
<dbReference type="GO" id="GO:0000164">
    <property type="term" value="C:protein phosphatase type 1 complex"/>
    <property type="evidence" value="ECO:0000266"/>
    <property type="project" value="RGD"/>
</dbReference>
<dbReference type="GO" id="GO:0071074">
    <property type="term" value="F:eukaryotic initiation factor eIF2 binding"/>
    <property type="evidence" value="ECO:0000266"/>
    <property type="project" value="RGD"/>
</dbReference>
<dbReference type="GO" id="GO:0019901">
    <property type="term" value="F:protein kinase binding"/>
    <property type="evidence" value="ECO:0000266"/>
    <property type="project" value="RGD"/>
</dbReference>
<dbReference type="GO" id="GO:0008157">
    <property type="term" value="F:protein phosphatase 1 binding"/>
    <property type="evidence" value="ECO:0000314"/>
    <property type="project" value="RGD"/>
</dbReference>
<dbReference type="GO" id="GO:0072542">
    <property type="term" value="F:protein phosphatase activator activity"/>
    <property type="evidence" value="ECO:0000266"/>
    <property type="project" value="RGD"/>
</dbReference>
<dbReference type="GO" id="GO:0019903">
    <property type="term" value="F:protein phosphatase binding"/>
    <property type="evidence" value="ECO:0000266"/>
    <property type="project" value="RGD"/>
</dbReference>
<dbReference type="GO" id="GO:0019888">
    <property type="term" value="F:protein phosphatase regulator activity"/>
    <property type="evidence" value="ECO:0000266"/>
    <property type="project" value="RGD"/>
</dbReference>
<dbReference type="GO" id="GO:0006915">
    <property type="term" value="P:apoptotic process"/>
    <property type="evidence" value="ECO:0007669"/>
    <property type="project" value="UniProtKB-KW"/>
</dbReference>
<dbReference type="GO" id="GO:0071236">
    <property type="term" value="P:cellular response to antibiotic"/>
    <property type="evidence" value="ECO:0000270"/>
    <property type="project" value="RGD"/>
</dbReference>
<dbReference type="GO" id="GO:0072732">
    <property type="term" value="P:cellular response to calcium ion starvation"/>
    <property type="evidence" value="ECO:0000270"/>
    <property type="project" value="RGD"/>
</dbReference>
<dbReference type="GO" id="GO:0071322">
    <property type="term" value="P:cellular response to carbohydrate stimulus"/>
    <property type="evidence" value="ECO:0000270"/>
    <property type="project" value="RGD"/>
</dbReference>
<dbReference type="GO" id="GO:1904310">
    <property type="term" value="P:cellular response to cordycepin"/>
    <property type="evidence" value="ECO:0000270"/>
    <property type="project" value="RGD"/>
</dbReference>
<dbReference type="GO" id="GO:1904308">
    <property type="term" value="P:cellular response to desipramine"/>
    <property type="evidence" value="ECO:0000270"/>
    <property type="project" value="RGD"/>
</dbReference>
<dbReference type="GO" id="GO:1904312">
    <property type="term" value="P:cellular response to gold(3+)"/>
    <property type="evidence" value="ECO:0000270"/>
    <property type="project" value="RGD"/>
</dbReference>
<dbReference type="GO" id="GO:0071456">
    <property type="term" value="P:cellular response to hypoxia"/>
    <property type="evidence" value="ECO:0000270"/>
    <property type="project" value="RGD"/>
</dbReference>
<dbReference type="GO" id="GO:1904314">
    <property type="term" value="P:cellular response to methamphetamine hydrochloride"/>
    <property type="evidence" value="ECO:0000270"/>
    <property type="project" value="RGD"/>
</dbReference>
<dbReference type="GO" id="GO:0072703">
    <property type="term" value="P:cellular response to methyl methanesulfonate"/>
    <property type="evidence" value="ECO:0000270"/>
    <property type="project" value="RGD"/>
</dbReference>
<dbReference type="GO" id="GO:0034644">
    <property type="term" value="P:cellular response to UV"/>
    <property type="evidence" value="ECO:0000270"/>
    <property type="project" value="RGD"/>
</dbReference>
<dbReference type="GO" id="GO:0071466">
    <property type="term" value="P:cellular response to xenobiotic stimulus"/>
    <property type="evidence" value="ECO:0000270"/>
    <property type="project" value="RGD"/>
</dbReference>
<dbReference type="GO" id="GO:0030968">
    <property type="term" value="P:endoplasmic reticulum unfolded protein response"/>
    <property type="evidence" value="ECO:0000270"/>
    <property type="project" value="RGD"/>
</dbReference>
<dbReference type="GO" id="GO:0008285">
    <property type="term" value="P:negative regulation of cell population proliferation"/>
    <property type="evidence" value="ECO:0000314"/>
    <property type="project" value="RGD"/>
</dbReference>
<dbReference type="GO" id="GO:0010955">
    <property type="term" value="P:negative regulation of protein processing"/>
    <property type="evidence" value="ECO:0000315"/>
    <property type="project" value="RGD"/>
</dbReference>
<dbReference type="GO" id="GO:0000122">
    <property type="term" value="P:negative regulation of transcription by RNA polymerase II"/>
    <property type="evidence" value="ECO:0000266"/>
    <property type="project" value="RGD"/>
</dbReference>
<dbReference type="GO" id="GO:0043065">
    <property type="term" value="P:positive regulation of apoptotic process"/>
    <property type="evidence" value="ECO:0000314"/>
    <property type="project" value="RGD"/>
</dbReference>
<dbReference type="GO" id="GO:0010628">
    <property type="term" value="P:positive regulation of gene expression"/>
    <property type="evidence" value="ECO:0000266"/>
    <property type="project" value="RGD"/>
</dbReference>
<dbReference type="GO" id="GO:0045943">
    <property type="term" value="P:positive regulation of transcription by RNA polymerase I"/>
    <property type="evidence" value="ECO:0000266"/>
    <property type="project" value="RGD"/>
</dbReference>
<dbReference type="GO" id="GO:0032058">
    <property type="term" value="P:positive regulation of translational initiation in response to stress"/>
    <property type="evidence" value="ECO:0000266"/>
    <property type="project" value="RGD"/>
</dbReference>
<dbReference type="GO" id="GO:0070972">
    <property type="term" value="P:protein localization to endoplasmic reticulum"/>
    <property type="evidence" value="ECO:0000266"/>
    <property type="project" value="RGD"/>
</dbReference>
<dbReference type="GO" id="GO:0045765">
    <property type="term" value="P:regulation of angiogenesis"/>
    <property type="evidence" value="ECO:0000315"/>
    <property type="project" value="RGD"/>
</dbReference>
<dbReference type="GO" id="GO:0036490">
    <property type="term" value="P:regulation of translation in response to endoplasmic reticulum stress"/>
    <property type="evidence" value="ECO:0000266"/>
    <property type="project" value="RGD"/>
</dbReference>
<dbReference type="GO" id="GO:0006446">
    <property type="term" value="P:regulation of translational initiation"/>
    <property type="evidence" value="ECO:0000266"/>
    <property type="project" value="RGD"/>
</dbReference>
<dbReference type="GO" id="GO:0043558">
    <property type="term" value="P:regulation of translational initiation in response to stress"/>
    <property type="evidence" value="ECO:0000266"/>
    <property type="project" value="RGD"/>
</dbReference>
<dbReference type="GO" id="GO:0042220">
    <property type="term" value="P:response to cocaine"/>
    <property type="evidence" value="ECO:0000270"/>
    <property type="project" value="RGD"/>
</dbReference>
<dbReference type="GO" id="GO:0034976">
    <property type="term" value="P:response to endoplasmic reticulum stress"/>
    <property type="evidence" value="ECO:0000270"/>
    <property type="project" value="RGD"/>
</dbReference>
<dbReference type="GO" id="GO:0090648">
    <property type="term" value="P:response to environmental enrichment"/>
    <property type="evidence" value="ECO:0000270"/>
    <property type="project" value="RGD"/>
</dbReference>
<dbReference type="GO" id="GO:0035902">
    <property type="term" value="P:response to immobilization stress"/>
    <property type="evidence" value="ECO:0000270"/>
    <property type="project" value="RGD"/>
</dbReference>
<dbReference type="InterPro" id="IPR051254">
    <property type="entry name" value="PPP1R15"/>
</dbReference>
<dbReference type="InterPro" id="IPR019523">
    <property type="entry name" value="Prot_Pase1_reg-su15A/B_C"/>
</dbReference>
<dbReference type="PANTHER" id="PTHR16489">
    <property type="entry name" value="GH11727P"/>
    <property type="match status" value="1"/>
</dbReference>
<dbReference type="PANTHER" id="PTHR16489:SF14">
    <property type="entry name" value="PROTEIN PHOSPHATASE 1 REGULATORY SUBUNIT 15A"/>
    <property type="match status" value="1"/>
</dbReference>
<dbReference type="Pfam" id="PF10488">
    <property type="entry name" value="PP1c_bdg"/>
    <property type="match status" value="1"/>
</dbReference>
<keyword id="KW-0053">Apoptosis</keyword>
<keyword id="KW-0256">Endoplasmic reticulum</keyword>
<keyword id="KW-0472">Membrane</keyword>
<keyword id="KW-0496">Mitochondrion</keyword>
<keyword id="KW-1000">Mitochondrion outer membrane</keyword>
<keyword id="KW-0597">Phosphoprotein</keyword>
<keyword id="KW-1185">Reference proteome</keyword>
<keyword id="KW-0677">Repeat</keyword>
<keyword id="KW-0346">Stress response</keyword>
<keyword id="KW-0810">Translation regulation</keyword>
<keyword id="KW-0832">Ubl conjugation</keyword>